<protein>
    <recommendedName>
        <fullName>Superoxide dismutase [Mn]</fullName>
        <ecNumber>1.15.1.1</ecNumber>
    </recommendedName>
</protein>
<feature type="chain" id="PRO_0000160047" description="Superoxide dismutase [Mn]">
    <location>
        <begin position="1" status="less than"/>
        <end position="138" status="greater than"/>
    </location>
</feature>
<feature type="binding site" evidence="1">
    <location>
        <position position="1"/>
    </location>
    <ligand>
        <name>Mn(2+)</name>
        <dbReference type="ChEBI" id="CHEBI:29035"/>
    </ligand>
</feature>
<feature type="binding site" evidence="1">
    <location>
        <position position="49"/>
    </location>
    <ligand>
        <name>Mn(2+)</name>
        <dbReference type="ChEBI" id="CHEBI:29035"/>
    </ligand>
</feature>
<feature type="binding site" evidence="1">
    <location>
        <position position="133"/>
    </location>
    <ligand>
        <name>Mn(2+)</name>
        <dbReference type="ChEBI" id="CHEBI:29035"/>
    </ligand>
</feature>
<feature type="binding site" evidence="1">
    <location>
        <position position="137"/>
    </location>
    <ligand>
        <name>Mn(2+)</name>
        <dbReference type="ChEBI" id="CHEBI:29035"/>
    </ligand>
</feature>
<feature type="non-terminal residue">
    <location>
        <position position="1"/>
    </location>
</feature>
<feature type="non-terminal residue">
    <location>
        <position position="138"/>
    </location>
</feature>
<accession>P53644</accession>
<keyword id="KW-0464">Manganese</keyword>
<keyword id="KW-0479">Metal-binding</keyword>
<keyword id="KW-0560">Oxidoreductase</keyword>
<sequence length="138" mass="14976">QHSKHHAAYVAGVNSAVAKLEEAREKGDHAAIFLNEKNLAFHLGGHVNHSIWWKNLSPNGGDKPTGDLAAAIDDQFGSFDKFQAQFTAAANGLQGSGWAVLGYDSLGQKLLTFQLYDQQANVPLGIIPLLQVDMWEHA</sequence>
<comment type="function">
    <text>Destroys superoxide anion radicals which are normally produced within the cells and which are toxic to biological systems.</text>
</comment>
<comment type="catalytic activity">
    <reaction>
        <text>2 superoxide + 2 H(+) = H2O2 + O2</text>
        <dbReference type="Rhea" id="RHEA:20696"/>
        <dbReference type="ChEBI" id="CHEBI:15378"/>
        <dbReference type="ChEBI" id="CHEBI:15379"/>
        <dbReference type="ChEBI" id="CHEBI:16240"/>
        <dbReference type="ChEBI" id="CHEBI:18421"/>
        <dbReference type="EC" id="1.15.1.1"/>
    </reaction>
</comment>
<comment type="cofactor">
    <cofactor evidence="1">
        <name>Mn(2+)</name>
        <dbReference type="ChEBI" id="CHEBI:29035"/>
    </cofactor>
    <text evidence="1">Binds 1 Mn(2+) ion per subunit.</text>
</comment>
<comment type="similarity">
    <text evidence="2">Belongs to the iron/manganese superoxide dismutase family.</text>
</comment>
<name>SODM_MYCCH</name>
<reference key="1">
    <citation type="journal article" date="1995" name="Clin. Mol. Pathol.">
        <title>Rapid identification of mycobacteria from AIDS patients by capillary electrophoretic profiling of amplified SOD gene.</title>
        <authorList>
            <person name="Bull T.J."/>
            <person name="Shanson D.C."/>
            <person name="Archard L.C."/>
        </authorList>
    </citation>
    <scope>NUCLEOTIDE SEQUENCE [GENOMIC DNA]</scope>
    <source>
        <strain>ATCC 35752 / DSM 43804 / JCM 6388 / KCTC 9505 / NCIMB 1474 / NCTC 946 / TMC 1544 / Friedmann / RAMC</strain>
    </source>
</reference>
<proteinExistence type="inferred from homology"/>
<gene>
    <name type="primary">sodA</name>
    <name type="synonym">sod</name>
</gene>
<organism>
    <name type="scientific">Mycobacteroides chelonae</name>
    <name type="common">Mycobacterium chelonae</name>
    <dbReference type="NCBI Taxonomy" id="1774"/>
    <lineage>
        <taxon>Bacteria</taxon>
        <taxon>Bacillati</taxon>
        <taxon>Actinomycetota</taxon>
        <taxon>Actinomycetes</taxon>
        <taxon>Mycobacteriales</taxon>
        <taxon>Mycobacteriaceae</taxon>
        <taxon>Mycobacteroides</taxon>
    </lineage>
</organism>
<dbReference type="EC" id="1.15.1.1"/>
<dbReference type="EMBL" id="Z48216">
    <property type="protein sequence ID" value="CAA88249.1"/>
    <property type="molecule type" value="Genomic_DNA"/>
</dbReference>
<dbReference type="PIR" id="S52361">
    <property type="entry name" value="S52361"/>
</dbReference>
<dbReference type="SMR" id="P53644"/>
<dbReference type="STRING" id="1774.GR01_00580"/>
<dbReference type="GO" id="GO:0046872">
    <property type="term" value="F:metal ion binding"/>
    <property type="evidence" value="ECO:0007669"/>
    <property type="project" value="UniProtKB-KW"/>
</dbReference>
<dbReference type="GO" id="GO:0004784">
    <property type="term" value="F:superoxide dismutase activity"/>
    <property type="evidence" value="ECO:0007669"/>
    <property type="project" value="UniProtKB-EC"/>
</dbReference>
<dbReference type="Gene3D" id="1.10.287.990">
    <property type="entry name" value="Fe,Mn superoxide dismutase (SOD) domain"/>
    <property type="match status" value="1"/>
</dbReference>
<dbReference type="Gene3D" id="3.55.40.20">
    <property type="entry name" value="Iron/manganese superoxide dismutase, C-terminal domain"/>
    <property type="match status" value="1"/>
</dbReference>
<dbReference type="InterPro" id="IPR050265">
    <property type="entry name" value="Fe/Mn_Superoxide_Dismutase"/>
</dbReference>
<dbReference type="InterPro" id="IPR001189">
    <property type="entry name" value="Mn/Fe_SOD"/>
</dbReference>
<dbReference type="InterPro" id="IPR019832">
    <property type="entry name" value="Mn/Fe_SOD_C"/>
</dbReference>
<dbReference type="InterPro" id="IPR019831">
    <property type="entry name" value="Mn/Fe_SOD_N"/>
</dbReference>
<dbReference type="InterPro" id="IPR036324">
    <property type="entry name" value="Mn/Fe_SOD_N_sf"/>
</dbReference>
<dbReference type="InterPro" id="IPR036314">
    <property type="entry name" value="SOD_C_sf"/>
</dbReference>
<dbReference type="PANTHER" id="PTHR11404">
    <property type="entry name" value="SUPEROXIDE DISMUTASE 2"/>
    <property type="match status" value="1"/>
</dbReference>
<dbReference type="PANTHER" id="PTHR11404:SF6">
    <property type="entry name" value="SUPEROXIDE DISMUTASE [MN], MITOCHONDRIAL"/>
    <property type="match status" value="1"/>
</dbReference>
<dbReference type="Pfam" id="PF02777">
    <property type="entry name" value="Sod_Fe_C"/>
    <property type="match status" value="1"/>
</dbReference>
<dbReference type="Pfam" id="PF00081">
    <property type="entry name" value="Sod_Fe_N"/>
    <property type="match status" value="1"/>
</dbReference>
<dbReference type="PRINTS" id="PR01703">
    <property type="entry name" value="MNSODISMTASE"/>
</dbReference>
<dbReference type="SUPFAM" id="SSF54719">
    <property type="entry name" value="Fe,Mn superoxide dismutase (SOD), C-terminal domain"/>
    <property type="match status" value="1"/>
</dbReference>
<dbReference type="SUPFAM" id="SSF46609">
    <property type="entry name" value="Fe,Mn superoxide dismutase (SOD), N-terminal domain"/>
    <property type="match status" value="1"/>
</dbReference>
<evidence type="ECO:0000250" key="1"/>
<evidence type="ECO:0000305" key="2"/>